<feature type="chain" id="PRO_0000114900" description="Ubiquitin domain-containing protein DSK2">
    <location>
        <begin position="1"/>
        <end position="373"/>
    </location>
</feature>
<feature type="domain" description="Ubiquitin-like" evidence="2">
    <location>
        <begin position="1"/>
        <end position="76"/>
    </location>
</feature>
<feature type="domain" description="UBA" evidence="1">
    <location>
        <begin position="327"/>
        <end position="371"/>
    </location>
</feature>
<feature type="region of interest" description="Disordered" evidence="3">
    <location>
        <begin position="221"/>
        <end position="270"/>
    </location>
</feature>
<feature type="compositionally biased region" description="Low complexity" evidence="3">
    <location>
        <begin position="231"/>
        <end position="270"/>
    </location>
</feature>
<feature type="cross-link" description="Glycyl lysine isopeptide (Lys-Gly) (interchain with G-Cter in ubiquitin)" evidence="6">
    <location>
        <position position="13"/>
    </location>
</feature>
<feature type="cross-link" description="Glycyl lysine isopeptide (Lys-Gly) (interchain with G-Cter in ubiquitin)" evidence="6">
    <location>
        <position position="76"/>
    </location>
</feature>
<feature type="sequence conflict" description="In Ref. 1; AAB07267." evidence="5" ref="1">
    <original>A</original>
    <variation>R</variation>
    <location>
        <position position="109"/>
    </location>
</feature>
<feature type="sequence conflict" description="In Ref. 1; AAB07267." evidence="5" ref="1">
    <original>A</original>
    <variation>R</variation>
    <location>
        <position position="296"/>
    </location>
</feature>
<feature type="strand" evidence="7">
    <location>
        <begin position="1"/>
        <end position="9"/>
    </location>
</feature>
<feature type="strand" evidence="7">
    <location>
        <begin position="12"/>
        <end position="18"/>
    </location>
</feature>
<feature type="helix" evidence="7">
    <location>
        <begin position="24"/>
        <end position="35"/>
    </location>
</feature>
<feature type="helix" evidence="7">
    <location>
        <begin position="39"/>
        <end position="41"/>
    </location>
</feature>
<feature type="strand" evidence="7">
    <location>
        <begin position="42"/>
        <end position="46"/>
    </location>
</feature>
<feature type="helix" evidence="7">
    <location>
        <begin position="58"/>
        <end position="60"/>
    </location>
</feature>
<feature type="strand" evidence="7">
    <location>
        <begin position="67"/>
        <end position="72"/>
    </location>
</feature>
<feature type="helix" evidence="8">
    <location>
        <begin position="328"/>
        <end position="331"/>
    </location>
</feature>
<feature type="helix" evidence="8">
    <location>
        <begin position="333"/>
        <end position="341"/>
    </location>
</feature>
<feature type="helix" evidence="8">
    <location>
        <begin position="347"/>
        <end position="357"/>
    </location>
</feature>
<feature type="helix" evidence="8">
    <location>
        <begin position="361"/>
        <end position="368"/>
    </location>
</feature>
<organism>
    <name type="scientific">Saccharomyces cerevisiae (strain ATCC 204508 / S288c)</name>
    <name type="common">Baker's yeast</name>
    <dbReference type="NCBI Taxonomy" id="559292"/>
    <lineage>
        <taxon>Eukaryota</taxon>
        <taxon>Fungi</taxon>
        <taxon>Dikarya</taxon>
        <taxon>Ascomycota</taxon>
        <taxon>Saccharomycotina</taxon>
        <taxon>Saccharomycetes</taxon>
        <taxon>Saccharomycetales</taxon>
        <taxon>Saccharomycetaceae</taxon>
        <taxon>Saccharomyces</taxon>
    </lineage>
</organism>
<reference key="1">
    <citation type="journal article" date="1996" name="J. Cell Biol.">
        <title>Yeast ubiquitin-like genes are involved in duplication of the microtubule organizing center.</title>
        <authorList>
            <person name="Biggins S."/>
            <person name="Ivanovska I."/>
            <person name="Rose M.D."/>
        </authorList>
    </citation>
    <scope>NUCLEOTIDE SEQUENCE [GENOMIC DNA]</scope>
    <source>
        <strain>ATCC 204508 / S288c</strain>
    </source>
</reference>
<reference key="2">
    <citation type="journal article" date="1997" name="Nature">
        <title>The nucleotide sequence of Saccharomyces cerevisiae chromosome XIII.</title>
        <authorList>
            <person name="Bowman S."/>
            <person name="Churcher C.M."/>
            <person name="Badcock K."/>
            <person name="Brown D."/>
            <person name="Chillingworth T."/>
            <person name="Connor R."/>
            <person name="Dedman K."/>
            <person name="Devlin K."/>
            <person name="Gentles S."/>
            <person name="Hamlin N."/>
            <person name="Hunt S."/>
            <person name="Jagels K."/>
            <person name="Lye G."/>
            <person name="Moule S."/>
            <person name="Odell C."/>
            <person name="Pearson D."/>
            <person name="Rajandream M.A."/>
            <person name="Rice P."/>
            <person name="Skelton J."/>
            <person name="Walsh S.V."/>
            <person name="Whitehead S."/>
            <person name="Barrell B.G."/>
        </authorList>
    </citation>
    <scope>NUCLEOTIDE SEQUENCE [LARGE SCALE GENOMIC DNA]</scope>
    <source>
        <strain>ATCC 204508 / S288c</strain>
    </source>
</reference>
<reference key="3">
    <citation type="journal article" date="2014" name="G3 (Bethesda)">
        <title>The reference genome sequence of Saccharomyces cerevisiae: Then and now.</title>
        <authorList>
            <person name="Engel S.R."/>
            <person name="Dietrich F.S."/>
            <person name="Fisk D.G."/>
            <person name="Binkley G."/>
            <person name="Balakrishnan R."/>
            <person name="Costanzo M.C."/>
            <person name="Dwight S.S."/>
            <person name="Hitz B.C."/>
            <person name="Karra K."/>
            <person name="Nash R.S."/>
            <person name="Weng S."/>
            <person name="Wong E.D."/>
            <person name="Lloyd P."/>
            <person name="Skrzypek M.S."/>
            <person name="Miyasato S.R."/>
            <person name="Simison M."/>
            <person name="Cherry J.M."/>
        </authorList>
    </citation>
    <scope>GENOME REANNOTATION</scope>
    <source>
        <strain>ATCC 204508 / S288c</strain>
    </source>
</reference>
<reference key="4">
    <citation type="journal article" date="2003" name="Nature">
        <title>Global analysis of protein expression in yeast.</title>
        <authorList>
            <person name="Ghaemmaghami S."/>
            <person name="Huh W.-K."/>
            <person name="Bower K."/>
            <person name="Howson R.W."/>
            <person name="Belle A."/>
            <person name="Dephoure N."/>
            <person name="O'Shea E.K."/>
            <person name="Weissman J.S."/>
        </authorList>
    </citation>
    <scope>LEVEL OF PROTEIN EXPRESSION [LARGE SCALE ANALYSIS]</scope>
</reference>
<reference key="5">
    <citation type="journal article" date="2009" name="Science">
        <title>Global analysis of Cdk1 substrate phosphorylation sites provides insights into evolution.</title>
        <authorList>
            <person name="Holt L.J."/>
            <person name="Tuch B.B."/>
            <person name="Villen J."/>
            <person name="Johnson A.D."/>
            <person name="Gygi S.P."/>
            <person name="Morgan D.O."/>
        </authorList>
    </citation>
    <scope>IDENTIFICATION BY MASS SPECTROMETRY [LARGE SCALE ANALYSIS]</scope>
</reference>
<reference key="6">
    <citation type="journal article" date="2012" name="Proteomics">
        <title>Sites of ubiquitin attachment in Saccharomyces cerevisiae.</title>
        <authorList>
            <person name="Starita L.M."/>
            <person name="Lo R.S."/>
            <person name="Eng J.K."/>
            <person name="von Haller P.D."/>
            <person name="Fields S."/>
        </authorList>
    </citation>
    <scope>UBIQUITINATION [LARGE SCALE ANALYSIS] AT LYS-13 AND LYS-76</scope>
    <scope>IDENTIFICATION BY MASS SPECTROMETRY [LARGE SCALE ANALYSIS]</scope>
</reference>
<reference key="7">
    <citation type="journal article" date="2005" name="Structure">
        <title>Structure of the UBA domain of Dsk2p in complex with ubiquitin molecular determinants for ubiquitin recognition.</title>
        <authorList>
            <person name="Ohno A."/>
            <person name="Jee J."/>
            <person name="Fujiwara K."/>
            <person name="Tenno T."/>
            <person name="Goda N."/>
            <person name="Tochio H."/>
            <person name="Kobayashi H."/>
            <person name="Hiroaki H."/>
            <person name="Shirakawa M."/>
        </authorList>
    </citation>
    <scope>STRUCTURE BY NMR OF 328-373</scope>
</reference>
<protein>
    <recommendedName>
        <fullName>Ubiquitin domain-containing protein DSK2</fullName>
    </recommendedName>
</protein>
<accession>P48510</accession>
<accession>D6W0A3</accession>
<sequence length="373" mass="39346">MSLNIHIKSGQDKWEVNVAPESTVLQFKEAINKANGIPVANQRLIYSGKILKDDQTVESYHIQDGHSVHLVKSQPKPQTASAAGANNATATGAAAGTGATPNMSSGQSAGFNPLADLTSARYAGYLNMPSADMFGPDGGALNNDSNNQDELLRMMENPIFQSQMNEMLSNPQMLDFMIQSNPQLQAMGPQARQMLQSPMFRQMLTNPDMIRQSMQFARMMDPNAGMGSAGGAASAFPAPGGDAPEEGSNTNTTSSSNTGNNAGTNAGTNAGANTAANPFASLLNPALNPFANAGNAASTGMPAFDPALLASMFQPPVQASQAEDTRPPEERYEHQLRQLNDMGFFDFDRNVAALRRSGGSVQGALDSLLNGDV</sequence>
<comment type="function">
    <text>Involved, with RAD23 in spindle pole body duplication. Involved in the ubiquitin-proteasome proteolytic pathway.</text>
</comment>
<comment type="interaction">
    <interactant intactId="EBI-6174">
        <id>P48510</id>
    </interactant>
    <interactant intactId="EBI-2345448">
        <id>P34222</id>
        <label>PTH2</label>
    </interactant>
    <organismsDiffer>false</organismsDiffer>
    <experiments>11</experiments>
</comment>
<comment type="interaction">
    <interactant intactId="EBI-6174">
        <id>P48510</id>
    </interactant>
    <interactant intactId="EBI-15949">
        <id>P38886</id>
        <label>RPN10</label>
    </interactant>
    <organismsDiffer>false</organismsDiffer>
    <experiments>5</experiments>
</comment>
<comment type="interaction">
    <interactant intactId="EBI-6174">
        <id>P48510</id>
    </interactant>
    <interactant intactId="EBI-32948">
        <id>O13563</id>
        <label>RPN13</label>
    </interactant>
    <organismsDiffer>false</organismsDiffer>
    <experiments>8</experiments>
</comment>
<comment type="interaction">
    <interactant intactId="EBI-6174">
        <id>P48510</id>
    </interactant>
    <interactant intactId="EBI-13910">
        <id>P33299</id>
        <label>RPT1</label>
    </interactant>
    <organismsDiffer>false</organismsDiffer>
    <experiments>3</experiments>
</comment>
<comment type="interaction">
    <interactant intactId="EBI-6174">
        <id>P48510</id>
    </interactant>
    <interactant intactId="EBI-7000452">
        <id>P0CG63</id>
        <label>UBI4</label>
    </interactant>
    <organismsDiffer>false</organismsDiffer>
    <experiments>3</experiments>
</comment>
<comment type="interaction">
    <interactant intactId="EBI-6174">
        <id>P48510</id>
    </interactant>
    <interactant intactId="EBI-954387">
        <id>Q16186</id>
        <label>ADRM1</label>
    </interactant>
    <organismsDiffer>true</organismsDiffer>
    <experiments>4</experiments>
</comment>
<comment type="interaction">
    <interactant intactId="EBI-6174">
        <id>P48510</id>
    </interactant>
    <interactant intactId="EBI-7710745">
        <id>O48726</id>
        <label>RPN13</label>
    </interactant>
    <organismsDiffer>true</organismsDiffer>
    <experiments>4</experiments>
</comment>
<comment type="interaction">
    <interactant intactId="EBI-6174">
        <id>P48510</id>
    </interactant>
    <interactant intactId="EBI-3390054">
        <id>P0CG48</id>
        <label>UBC</label>
    </interactant>
    <organismsDiffer>true</organismsDiffer>
    <experiments>2</experiments>
</comment>
<comment type="subcellular location">
    <subcellularLocation>
        <location evidence="5">Nucleus</location>
    </subcellularLocation>
</comment>
<comment type="miscellaneous">
    <text evidence="4">Present with 3930 molecules/cell in log phase SD medium.</text>
</comment>
<proteinExistence type="evidence at protein level"/>
<name>DSK2_YEAST</name>
<evidence type="ECO:0000255" key="1">
    <source>
        <dbReference type="PROSITE-ProRule" id="PRU00212"/>
    </source>
</evidence>
<evidence type="ECO:0000255" key="2">
    <source>
        <dbReference type="PROSITE-ProRule" id="PRU00214"/>
    </source>
</evidence>
<evidence type="ECO:0000256" key="3">
    <source>
        <dbReference type="SAM" id="MobiDB-lite"/>
    </source>
</evidence>
<evidence type="ECO:0000269" key="4">
    <source>
    </source>
</evidence>
<evidence type="ECO:0000305" key="5"/>
<evidence type="ECO:0007744" key="6">
    <source>
    </source>
</evidence>
<evidence type="ECO:0007829" key="7">
    <source>
        <dbReference type="PDB" id="2BWF"/>
    </source>
</evidence>
<evidence type="ECO:0007829" key="8">
    <source>
        <dbReference type="PDB" id="4UN2"/>
    </source>
</evidence>
<dbReference type="EMBL" id="L40587">
    <property type="protein sequence ID" value="AAB07267.1"/>
    <property type="molecule type" value="Genomic_DNA"/>
</dbReference>
<dbReference type="EMBL" id="Z49704">
    <property type="protein sequence ID" value="CAA89774.1"/>
    <property type="molecule type" value="Genomic_DNA"/>
</dbReference>
<dbReference type="EMBL" id="BK006946">
    <property type="protein sequence ID" value="DAA10177.1"/>
    <property type="molecule type" value="Genomic_DNA"/>
</dbReference>
<dbReference type="PIR" id="S54583">
    <property type="entry name" value="S54583"/>
</dbReference>
<dbReference type="RefSeq" id="NP_014003.1">
    <property type="nucleotide sequence ID" value="NM_001182783.1"/>
</dbReference>
<dbReference type="PDB" id="1WR1">
    <property type="method" value="NMR"/>
    <property type="chains" value="B=328-373"/>
</dbReference>
<dbReference type="PDB" id="2BWB">
    <property type="method" value="X-ray"/>
    <property type="resolution" value="2.30 A"/>
    <property type="chains" value="A/B/C/D/E/F/G/H/I=328-371"/>
</dbReference>
<dbReference type="PDB" id="2BWE">
    <property type="method" value="X-ray"/>
    <property type="resolution" value="3.10 A"/>
    <property type="chains" value="A/B/C/D/E/F/G/H/I/J/K/L/M/N/O/P/Q/R=328-373, S/T/U=1-75"/>
</dbReference>
<dbReference type="PDB" id="2BWF">
    <property type="method" value="X-ray"/>
    <property type="resolution" value="1.15 A"/>
    <property type="chains" value="A/B=1-75"/>
</dbReference>
<dbReference type="PDB" id="3M63">
    <property type="method" value="X-ray"/>
    <property type="resolution" value="2.40 A"/>
    <property type="chains" value="B=1-75"/>
</dbReference>
<dbReference type="PDB" id="4UN2">
    <property type="method" value="X-ray"/>
    <property type="resolution" value="1.51 A"/>
    <property type="chains" value="B=328-373"/>
</dbReference>
<dbReference type="PDBsum" id="1WR1"/>
<dbReference type="PDBsum" id="2BWB"/>
<dbReference type="PDBsum" id="2BWE"/>
<dbReference type="PDBsum" id="2BWF"/>
<dbReference type="PDBsum" id="3M63"/>
<dbReference type="PDBsum" id="4UN2"/>
<dbReference type="BMRB" id="P48510"/>
<dbReference type="SMR" id="P48510"/>
<dbReference type="BioGRID" id="35455">
    <property type="interactions" value="147"/>
</dbReference>
<dbReference type="DIP" id="DIP-4398N"/>
<dbReference type="FunCoup" id="P48510">
    <property type="interactions" value="861"/>
</dbReference>
<dbReference type="IntAct" id="P48510">
    <property type="interactions" value="27"/>
</dbReference>
<dbReference type="MINT" id="P48510"/>
<dbReference type="STRING" id="4932.YMR276W"/>
<dbReference type="iPTMnet" id="P48510"/>
<dbReference type="PaxDb" id="4932-YMR276W"/>
<dbReference type="PeptideAtlas" id="P48510"/>
<dbReference type="EnsemblFungi" id="YMR276W_mRNA">
    <property type="protein sequence ID" value="YMR276W"/>
    <property type="gene ID" value="YMR276W"/>
</dbReference>
<dbReference type="GeneID" id="855319"/>
<dbReference type="KEGG" id="sce:YMR276W"/>
<dbReference type="AGR" id="SGD:S000004889"/>
<dbReference type="SGD" id="S000004889">
    <property type="gene designation" value="DSK2"/>
</dbReference>
<dbReference type="VEuPathDB" id="FungiDB:YMR276W"/>
<dbReference type="eggNOG" id="KOG0010">
    <property type="taxonomic scope" value="Eukaryota"/>
</dbReference>
<dbReference type="GeneTree" id="ENSGT00940000175001"/>
<dbReference type="HOGENOM" id="CLU_024293_0_1_1"/>
<dbReference type="InParanoid" id="P48510"/>
<dbReference type="OMA" id="PGMDMFG"/>
<dbReference type="OrthoDB" id="267397at2759"/>
<dbReference type="BioCyc" id="YEAST:G3O-32947-MONOMER"/>
<dbReference type="Reactome" id="R-SCE-8856825">
    <property type="pathway name" value="Cargo recognition for clathrin-mediated endocytosis"/>
</dbReference>
<dbReference type="BioGRID-ORCS" id="855319">
    <property type="hits" value="6 hits in 10 CRISPR screens"/>
</dbReference>
<dbReference type="CD-CODE" id="256AC21A">
    <property type="entry name" value="Proteasome condensate"/>
</dbReference>
<dbReference type="EvolutionaryTrace" id="P48510"/>
<dbReference type="PRO" id="PR:P48510"/>
<dbReference type="Proteomes" id="UP000002311">
    <property type="component" value="Chromosome XIII"/>
</dbReference>
<dbReference type="RNAct" id="P48510">
    <property type="molecule type" value="protein"/>
</dbReference>
<dbReference type="GO" id="GO:0005829">
    <property type="term" value="C:cytosol"/>
    <property type="evidence" value="ECO:0000318"/>
    <property type="project" value="GO_Central"/>
</dbReference>
<dbReference type="GO" id="GO:0005634">
    <property type="term" value="C:nucleus"/>
    <property type="evidence" value="ECO:0000305"/>
    <property type="project" value="SGD"/>
</dbReference>
<dbReference type="GO" id="GO:0036435">
    <property type="term" value="F:K48-linked polyubiquitin modification-dependent protein binding"/>
    <property type="evidence" value="ECO:0000314"/>
    <property type="project" value="SGD"/>
</dbReference>
<dbReference type="GO" id="GO:0031593">
    <property type="term" value="F:polyubiquitin modification-dependent protein binding"/>
    <property type="evidence" value="ECO:0000318"/>
    <property type="project" value="GO_Central"/>
</dbReference>
<dbReference type="GO" id="GO:0030674">
    <property type="term" value="F:protein-macromolecule adaptor activity"/>
    <property type="evidence" value="ECO:0000315"/>
    <property type="project" value="SGD"/>
</dbReference>
<dbReference type="GO" id="GO:0036503">
    <property type="term" value="P:ERAD pathway"/>
    <property type="evidence" value="ECO:0000315"/>
    <property type="project" value="SGD"/>
</dbReference>
<dbReference type="GO" id="GO:0072665">
    <property type="term" value="P:protein localization to vacuole"/>
    <property type="evidence" value="ECO:0000315"/>
    <property type="project" value="SGD"/>
</dbReference>
<dbReference type="GO" id="GO:0030474">
    <property type="term" value="P:spindle pole body duplication"/>
    <property type="evidence" value="ECO:0000316"/>
    <property type="project" value="SGD"/>
</dbReference>
<dbReference type="GO" id="GO:0006511">
    <property type="term" value="P:ubiquitin-dependent protein catabolic process"/>
    <property type="evidence" value="ECO:0000318"/>
    <property type="project" value="GO_Central"/>
</dbReference>
<dbReference type="CDD" id="cd14324">
    <property type="entry name" value="UBA_Dsk2p_like"/>
    <property type="match status" value="1"/>
</dbReference>
<dbReference type="CDD" id="cd16106">
    <property type="entry name" value="Ubl_Dsk2p_like"/>
    <property type="match status" value="1"/>
</dbReference>
<dbReference type="FunFam" id="1.10.8.10:FF:000024">
    <property type="entry name" value="Ubiquitin domain-containing protein DSK2"/>
    <property type="match status" value="1"/>
</dbReference>
<dbReference type="FunFam" id="3.10.20.90:FF:000220">
    <property type="entry name" value="Ubiquitin-like protein DskB"/>
    <property type="match status" value="1"/>
</dbReference>
<dbReference type="Gene3D" id="1.10.8.10">
    <property type="entry name" value="DNA helicase RuvA subunit, C-terminal domain"/>
    <property type="match status" value="1"/>
</dbReference>
<dbReference type="Gene3D" id="3.10.20.90">
    <property type="entry name" value="Phosphatidylinositol 3-kinase Catalytic Subunit, Chain A, domain 1"/>
    <property type="match status" value="1"/>
</dbReference>
<dbReference type="InterPro" id="IPR006636">
    <property type="entry name" value="STI1_HS-bd"/>
</dbReference>
<dbReference type="InterPro" id="IPR015940">
    <property type="entry name" value="UBA"/>
</dbReference>
<dbReference type="InterPro" id="IPR009060">
    <property type="entry name" value="UBA-like_sf"/>
</dbReference>
<dbReference type="InterPro" id="IPR015496">
    <property type="entry name" value="Ubiquilin"/>
</dbReference>
<dbReference type="InterPro" id="IPR000626">
    <property type="entry name" value="Ubiquitin-like_dom"/>
</dbReference>
<dbReference type="InterPro" id="IPR029071">
    <property type="entry name" value="Ubiquitin-like_domsf"/>
</dbReference>
<dbReference type="InterPro" id="IPR019954">
    <property type="entry name" value="Ubiquitin_CS"/>
</dbReference>
<dbReference type="PANTHER" id="PTHR10677:SF3">
    <property type="entry name" value="FI07626P-RELATED"/>
    <property type="match status" value="1"/>
</dbReference>
<dbReference type="PANTHER" id="PTHR10677">
    <property type="entry name" value="UBIQUILIN"/>
    <property type="match status" value="1"/>
</dbReference>
<dbReference type="Pfam" id="PF00240">
    <property type="entry name" value="ubiquitin"/>
    <property type="match status" value="1"/>
</dbReference>
<dbReference type="SMART" id="SM00727">
    <property type="entry name" value="STI1"/>
    <property type="match status" value="2"/>
</dbReference>
<dbReference type="SMART" id="SM00165">
    <property type="entry name" value="UBA"/>
    <property type="match status" value="1"/>
</dbReference>
<dbReference type="SMART" id="SM00213">
    <property type="entry name" value="UBQ"/>
    <property type="match status" value="1"/>
</dbReference>
<dbReference type="SUPFAM" id="SSF46934">
    <property type="entry name" value="UBA-like"/>
    <property type="match status" value="1"/>
</dbReference>
<dbReference type="SUPFAM" id="SSF54236">
    <property type="entry name" value="Ubiquitin-like"/>
    <property type="match status" value="1"/>
</dbReference>
<dbReference type="PROSITE" id="PS50030">
    <property type="entry name" value="UBA"/>
    <property type="match status" value="1"/>
</dbReference>
<dbReference type="PROSITE" id="PS00299">
    <property type="entry name" value="UBIQUITIN_1"/>
    <property type="match status" value="1"/>
</dbReference>
<dbReference type="PROSITE" id="PS50053">
    <property type="entry name" value="UBIQUITIN_2"/>
    <property type="match status" value="1"/>
</dbReference>
<gene>
    <name type="primary">DSK2</name>
    <name type="synonym">SHE4</name>
    <name type="ordered locus">YMR276W</name>
    <name type="ORF">YM8021.02</name>
</gene>
<keyword id="KW-0002">3D-structure</keyword>
<keyword id="KW-1017">Isopeptide bond</keyword>
<keyword id="KW-0539">Nucleus</keyword>
<keyword id="KW-1185">Reference proteome</keyword>
<keyword id="KW-0832">Ubl conjugation</keyword>